<gene>
    <name evidence="1" type="primary">rpsU</name>
    <name type="ordered locus">Pnec_1419</name>
</gene>
<reference key="1">
    <citation type="journal article" date="2013" name="Proc. Natl. Acad. Sci. U.S.A.">
        <title>Polynucleobacter necessarius, a model for genome reduction in both free-living and symbiotic bacteria.</title>
        <authorList>
            <person name="Boscaro V."/>
            <person name="Felletti M."/>
            <person name="Vannini C."/>
            <person name="Ackerman M.S."/>
            <person name="Chain P.S."/>
            <person name="Malfatti S."/>
            <person name="Vergez L.M."/>
            <person name="Shin M."/>
            <person name="Doak T.G."/>
            <person name="Lynch M."/>
            <person name="Petroni G."/>
        </authorList>
    </citation>
    <scope>NUCLEOTIDE SEQUENCE [LARGE SCALE GENOMIC DNA]</scope>
    <source>
        <strain>STIR1</strain>
    </source>
</reference>
<dbReference type="EMBL" id="CP001010">
    <property type="protein sequence ID" value="ACB44518.1"/>
    <property type="molecule type" value="Genomic_DNA"/>
</dbReference>
<dbReference type="SMR" id="B1XVZ1"/>
<dbReference type="STRING" id="452638.Pnec_1419"/>
<dbReference type="KEGG" id="pne:Pnec_1419"/>
<dbReference type="eggNOG" id="COG0828">
    <property type="taxonomic scope" value="Bacteria"/>
</dbReference>
<dbReference type="HOGENOM" id="CLU_159258_1_2_4"/>
<dbReference type="OrthoDB" id="9799244at2"/>
<dbReference type="GO" id="GO:1990904">
    <property type="term" value="C:ribonucleoprotein complex"/>
    <property type="evidence" value="ECO:0007669"/>
    <property type="project" value="UniProtKB-KW"/>
</dbReference>
<dbReference type="GO" id="GO:0005840">
    <property type="term" value="C:ribosome"/>
    <property type="evidence" value="ECO:0007669"/>
    <property type="project" value="UniProtKB-KW"/>
</dbReference>
<dbReference type="GO" id="GO:0003735">
    <property type="term" value="F:structural constituent of ribosome"/>
    <property type="evidence" value="ECO:0007669"/>
    <property type="project" value="InterPro"/>
</dbReference>
<dbReference type="GO" id="GO:0006412">
    <property type="term" value="P:translation"/>
    <property type="evidence" value="ECO:0007669"/>
    <property type="project" value="UniProtKB-UniRule"/>
</dbReference>
<dbReference type="Gene3D" id="1.20.5.1150">
    <property type="entry name" value="Ribosomal protein S8"/>
    <property type="match status" value="1"/>
</dbReference>
<dbReference type="HAMAP" id="MF_00358">
    <property type="entry name" value="Ribosomal_bS21"/>
    <property type="match status" value="1"/>
</dbReference>
<dbReference type="InterPro" id="IPR001911">
    <property type="entry name" value="Ribosomal_bS21"/>
</dbReference>
<dbReference type="InterPro" id="IPR018278">
    <property type="entry name" value="Ribosomal_bS21_CS"/>
</dbReference>
<dbReference type="InterPro" id="IPR038380">
    <property type="entry name" value="Ribosomal_bS21_sf"/>
</dbReference>
<dbReference type="NCBIfam" id="TIGR00030">
    <property type="entry name" value="S21p"/>
    <property type="match status" value="1"/>
</dbReference>
<dbReference type="PANTHER" id="PTHR21109">
    <property type="entry name" value="MITOCHONDRIAL 28S RIBOSOMAL PROTEIN S21"/>
    <property type="match status" value="1"/>
</dbReference>
<dbReference type="PANTHER" id="PTHR21109:SF22">
    <property type="entry name" value="SMALL RIBOSOMAL SUBUNIT PROTEIN BS21"/>
    <property type="match status" value="1"/>
</dbReference>
<dbReference type="Pfam" id="PF01165">
    <property type="entry name" value="Ribosomal_S21"/>
    <property type="match status" value="1"/>
</dbReference>
<dbReference type="PRINTS" id="PR00976">
    <property type="entry name" value="RIBOSOMALS21"/>
</dbReference>
<dbReference type="PROSITE" id="PS01181">
    <property type="entry name" value="RIBOSOMAL_S21"/>
    <property type="match status" value="1"/>
</dbReference>
<evidence type="ECO:0000255" key="1">
    <source>
        <dbReference type="HAMAP-Rule" id="MF_00358"/>
    </source>
</evidence>
<evidence type="ECO:0000305" key="2"/>
<name>RS21_POLNS</name>
<accession>B1XVZ1</accession>
<organism>
    <name type="scientific">Polynucleobacter necessarius subsp. necessarius (strain STIR1)</name>
    <dbReference type="NCBI Taxonomy" id="452638"/>
    <lineage>
        <taxon>Bacteria</taxon>
        <taxon>Pseudomonadati</taxon>
        <taxon>Pseudomonadota</taxon>
        <taxon>Betaproteobacteria</taxon>
        <taxon>Burkholderiales</taxon>
        <taxon>Burkholderiaceae</taxon>
        <taxon>Polynucleobacter</taxon>
    </lineage>
</organism>
<keyword id="KW-0687">Ribonucleoprotein</keyword>
<keyword id="KW-0689">Ribosomal protein</keyword>
<sequence>MTTVRLRENEPFEVALRRFKRTIEKNGLLTDLRAREFYEKPTAERKRKKAAAAKRHYKRIRSQMLPKKLY</sequence>
<comment type="similarity">
    <text evidence="1">Belongs to the bacterial ribosomal protein bS21 family.</text>
</comment>
<protein>
    <recommendedName>
        <fullName evidence="1">Small ribosomal subunit protein bS21</fullName>
    </recommendedName>
    <alternativeName>
        <fullName evidence="2">30S ribosomal protein S21</fullName>
    </alternativeName>
</protein>
<feature type="chain" id="PRO_1000120646" description="Small ribosomal subunit protein bS21">
    <location>
        <begin position="1"/>
        <end position="70"/>
    </location>
</feature>
<proteinExistence type="inferred from homology"/>